<keyword id="KW-0066">ATP synthesis</keyword>
<keyword id="KW-0139">CF(1)</keyword>
<keyword id="KW-0375">Hydrogen ion transport</keyword>
<keyword id="KW-0406">Ion transport</keyword>
<keyword id="KW-0472">Membrane</keyword>
<keyword id="KW-1185">Reference proteome</keyword>
<keyword id="KW-0793">Thylakoid</keyword>
<keyword id="KW-0813">Transport</keyword>
<protein>
    <recommendedName>
        <fullName evidence="1">ATP synthase gamma chain</fullName>
    </recommendedName>
    <alternativeName>
        <fullName evidence="1">ATP synthase F1 sector gamma subunit</fullName>
    </alternativeName>
    <alternativeName>
        <fullName evidence="1">F-ATPase gamma subunit</fullName>
    </alternativeName>
</protein>
<organism>
    <name type="scientific">Synechococcus elongatus (strain ATCC 33912 / PCC 7942 / FACHB-805)</name>
    <name type="common">Anacystis nidulans R2</name>
    <dbReference type="NCBI Taxonomy" id="1140"/>
    <lineage>
        <taxon>Bacteria</taxon>
        <taxon>Bacillati</taxon>
        <taxon>Cyanobacteriota</taxon>
        <taxon>Cyanophyceae</taxon>
        <taxon>Synechococcales</taxon>
        <taxon>Synechococcaceae</taxon>
        <taxon>Synechococcus</taxon>
    </lineage>
</organism>
<dbReference type="EMBL" id="CP000100">
    <property type="protein sequence ID" value="ABB56369.1"/>
    <property type="molecule type" value="Genomic_DNA"/>
</dbReference>
<dbReference type="RefSeq" id="WP_011377540.1">
    <property type="nucleotide sequence ID" value="NZ_JACJTX010000002.1"/>
</dbReference>
<dbReference type="SMR" id="Q31RF0"/>
<dbReference type="STRING" id="1140.Synpcc7942_0337"/>
<dbReference type="PaxDb" id="1140-Synpcc7942_0337"/>
<dbReference type="KEGG" id="syf:Synpcc7942_0337"/>
<dbReference type="eggNOG" id="COG0224">
    <property type="taxonomic scope" value="Bacteria"/>
</dbReference>
<dbReference type="HOGENOM" id="CLU_050669_0_0_3"/>
<dbReference type="OrthoDB" id="9812769at2"/>
<dbReference type="BioCyc" id="MetaCyc:SYNPCC7942_0337-MONOMER"/>
<dbReference type="BioCyc" id="SYNEL:SYNPCC7942_0337-MONOMER"/>
<dbReference type="Proteomes" id="UP000889800">
    <property type="component" value="Chromosome"/>
</dbReference>
<dbReference type="GO" id="GO:0031676">
    <property type="term" value="C:plasma membrane-derived thylakoid membrane"/>
    <property type="evidence" value="ECO:0007669"/>
    <property type="project" value="UniProtKB-SubCell"/>
</dbReference>
<dbReference type="GO" id="GO:0045259">
    <property type="term" value="C:proton-transporting ATP synthase complex"/>
    <property type="evidence" value="ECO:0007669"/>
    <property type="project" value="UniProtKB-KW"/>
</dbReference>
<dbReference type="GO" id="GO:0005524">
    <property type="term" value="F:ATP binding"/>
    <property type="evidence" value="ECO:0007669"/>
    <property type="project" value="UniProtKB-UniRule"/>
</dbReference>
<dbReference type="GO" id="GO:0046933">
    <property type="term" value="F:proton-transporting ATP synthase activity, rotational mechanism"/>
    <property type="evidence" value="ECO:0007669"/>
    <property type="project" value="UniProtKB-UniRule"/>
</dbReference>
<dbReference type="CDD" id="cd12151">
    <property type="entry name" value="F1-ATPase_gamma"/>
    <property type="match status" value="1"/>
</dbReference>
<dbReference type="FunFam" id="3.40.1380.10:FF:000006">
    <property type="entry name" value="ATP synthase gamma chain"/>
    <property type="match status" value="1"/>
</dbReference>
<dbReference type="FunFam" id="1.10.287.80:FF:000003">
    <property type="entry name" value="ATP synthase gamma chain, chloroplastic"/>
    <property type="match status" value="1"/>
</dbReference>
<dbReference type="FunFam" id="1.10.287.80:FF:000004">
    <property type="entry name" value="ATP synthase gamma chain, chloroplastic"/>
    <property type="match status" value="1"/>
</dbReference>
<dbReference type="Gene3D" id="3.40.1380.10">
    <property type="match status" value="1"/>
</dbReference>
<dbReference type="Gene3D" id="1.10.287.80">
    <property type="entry name" value="ATP synthase, gamma subunit, helix hairpin domain"/>
    <property type="match status" value="2"/>
</dbReference>
<dbReference type="HAMAP" id="MF_00815">
    <property type="entry name" value="ATP_synth_gamma_bact"/>
    <property type="match status" value="1"/>
</dbReference>
<dbReference type="InterPro" id="IPR035968">
    <property type="entry name" value="ATP_synth_F1_ATPase_gsu"/>
</dbReference>
<dbReference type="InterPro" id="IPR000131">
    <property type="entry name" value="ATP_synth_F1_gsu"/>
</dbReference>
<dbReference type="InterPro" id="IPR023632">
    <property type="entry name" value="ATP_synth_F1_gsu_CS"/>
</dbReference>
<dbReference type="NCBIfam" id="TIGR01146">
    <property type="entry name" value="ATPsyn_F1gamma"/>
    <property type="match status" value="1"/>
</dbReference>
<dbReference type="NCBIfam" id="NF004145">
    <property type="entry name" value="PRK05621.1-2"/>
    <property type="match status" value="1"/>
</dbReference>
<dbReference type="PANTHER" id="PTHR11693">
    <property type="entry name" value="ATP SYNTHASE GAMMA CHAIN"/>
    <property type="match status" value="1"/>
</dbReference>
<dbReference type="PANTHER" id="PTHR11693:SF41">
    <property type="entry name" value="ATP SYNTHASE GAMMA CHAIN, CHLOROPLASTIC"/>
    <property type="match status" value="1"/>
</dbReference>
<dbReference type="Pfam" id="PF00231">
    <property type="entry name" value="ATP-synt"/>
    <property type="match status" value="1"/>
</dbReference>
<dbReference type="PRINTS" id="PR00126">
    <property type="entry name" value="ATPASEGAMMA"/>
</dbReference>
<dbReference type="SUPFAM" id="SSF52943">
    <property type="entry name" value="ATP synthase (F1-ATPase), gamma subunit"/>
    <property type="match status" value="1"/>
</dbReference>
<dbReference type="PROSITE" id="PS00153">
    <property type="entry name" value="ATPASE_GAMMA"/>
    <property type="match status" value="1"/>
</dbReference>
<evidence type="ECO:0000255" key="1">
    <source>
        <dbReference type="HAMAP-Rule" id="MF_00815"/>
    </source>
</evidence>
<name>ATPG_SYNE7</name>
<sequence>MANLKAIRDRIKSVRNTRKITEAMRLVAAAKVRRAQEQVLSTRPFADRLAQVLAGLQQRLQFENVDLPLLQRREVKTVALLVVSGDRGLCGGYNSNVIRRAEQRARELSAQGLDYKFVIVGRKAGQYFQRREQPIEATYSGLEQIPTAQEANDIADELLSLFLSGTVDRVELVYTKFLSLVASNPVVQTLLPLDPQGLASSDDEIFRLTTRGGSFTVEREKLTSEVAPLPRDMIFEQDPAQILSALLPLYLSNQLLRALQEAAASELAARMTAMNSASDNANALVGQLTLVYNKARQAAITQELLEVVAGAEALNG</sequence>
<feature type="chain" id="PRO_1000053363" description="ATP synthase gamma chain">
    <location>
        <begin position="1"/>
        <end position="316"/>
    </location>
</feature>
<proteinExistence type="inferred from homology"/>
<reference key="1">
    <citation type="submission" date="2005-08" db="EMBL/GenBank/DDBJ databases">
        <title>Complete sequence of chromosome 1 of Synechococcus elongatus PCC 7942.</title>
        <authorList>
            <consortium name="US DOE Joint Genome Institute"/>
            <person name="Copeland A."/>
            <person name="Lucas S."/>
            <person name="Lapidus A."/>
            <person name="Barry K."/>
            <person name="Detter J.C."/>
            <person name="Glavina T."/>
            <person name="Hammon N."/>
            <person name="Israni S."/>
            <person name="Pitluck S."/>
            <person name="Schmutz J."/>
            <person name="Larimer F."/>
            <person name="Land M."/>
            <person name="Kyrpides N."/>
            <person name="Lykidis A."/>
            <person name="Golden S."/>
            <person name="Richardson P."/>
        </authorList>
    </citation>
    <scope>NUCLEOTIDE SEQUENCE [LARGE SCALE GENOMIC DNA]</scope>
    <source>
        <strain>ATCC 33912 / PCC 7942 / FACHB-805</strain>
    </source>
</reference>
<comment type="function">
    <text evidence="1">Produces ATP from ADP in the presence of a proton gradient across the membrane. The gamma chain is believed to be important in regulating ATPase activity and the flow of protons through the CF(0) complex.</text>
</comment>
<comment type="subunit">
    <text evidence="1">F-type ATPases have 2 components, CF(1) - the catalytic core - and CF(0) - the membrane proton channel. CF(1) has five subunits: alpha(3), beta(3), gamma(1), delta(1), epsilon(1). CF(0) has three main subunits: a, b and c.</text>
</comment>
<comment type="subcellular location">
    <subcellularLocation>
        <location evidence="1">Cellular thylakoid membrane</location>
        <topology evidence="1">Peripheral membrane protein</topology>
    </subcellularLocation>
</comment>
<comment type="similarity">
    <text evidence="1">Belongs to the ATPase gamma chain family.</text>
</comment>
<gene>
    <name evidence="1" type="primary">atpG</name>
    <name evidence="1" type="synonym">atpC</name>
    <name type="ordered locus">Synpcc7942_0337</name>
</gene>
<accession>Q31RF0</accession>